<keyword id="KW-0004">4Fe-4S</keyword>
<keyword id="KW-0963">Cytoplasm</keyword>
<keyword id="KW-0408">Iron</keyword>
<keyword id="KW-0411">Iron-sulfur</keyword>
<keyword id="KW-0479">Metal-binding</keyword>
<keyword id="KW-1185">Reference proteome</keyword>
<keyword id="KW-0949">S-adenosyl-L-methionine</keyword>
<keyword id="KW-0808">Transferase</keyword>
<dbReference type="EC" id="2.8.1.8" evidence="1"/>
<dbReference type="EMBL" id="BX950851">
    <property type="protein sequence ID" value="CAG74207.1"/>
    <property type="molecule type" value="Genomic_DNA"/>
</dbReference>
<dbReference type="RefSeq" id="WP_011092884.1">
    <property type="nucleotide sequence ID" value="NC_004547.2"/>
</dbReference>
<dbReference type="SMR" id="Q6D7M8"/>
<dbReference type="STRING" id="218491.ECA1297"/>
<dbReference type="GeneID" id="57208107"/>
<dbReference type="KEGG" id="eca:ECA1297"/>
<dbReference type="PATRIC" id="fig|218491.5.peg.1321"/>
<dbReference type="eggNOG" id="COG0320">
    <property type="taxonomic scope" value="Bacteria"/>
</dbReference>
<dbReference type="HOGENOM" id="CLU_033144_2_1_6"/>
<dbReference type="OrthoDB" id="9787898at2"/>
<dbReference type="UniPathway" id="UPA00538">
    <property type="reaction ID" value="UER00593"/>
</dbReference>
<dbReference type="Proteomes" id="UP000007966">
    <property type="component" value="Chromosome"/>
</dbReference>
<dbReference type="GO" id="GO:0005737">
    <property type="term" value="C:cytoplasm"/>
    <property type="evidence" value="ECO:0007669"/>
    <property type="project" value="UniProtKB-SubCell"/>
</dbReference>
<dbReference type="GO" id="GO:0051539">
    <property type="term" value="F:4 iron, 4 sulfur cluster binding"/>
    <property type="evidence" value="ECO:0007669"/>
    <property type="project" value="UniProtKB-UniRule"/>
</dbReference>
<dbReference type="GO" id="GO:0016992">
    <property type="term" value="F:lipoate synthase activity"/>
    <property type="evidence" value="ECO:0007669"/>
    <property type="project" value="UniProtKB-UniRule"/>
</dbReference>
<dbReference type="GO" id="GO:0046872">
    <property type="term" value="F:metal ion binding"/>
    <property type="evidence" value="ECO:0007669"/>
    <property type="project" value="UniProtKB-KW"/>
</dbReference>
<dbReference type="CDD" id="cd01335">
    <property type="entry name" value="Radical_SAM"/>
    <property type="match status" value="1"/>
</dbReference>
<dbReference type="FunFam" id="3.20.20.70:FF:000023">
    <property type="entry name" value="Lipoyl synthase"/>
    <property type="match status" value="1"/>
</dbReference>
<dbReference type="Gene3D" id="3.20.20.70">
    <property type="entry name" value="Aldolase class I"/>
    <property type="match status" value="1"/>
</dbReference>
<dbReference type="HAMAP" id="MF_00206">
    <property type="entry name" value="Lipoyl_synth"/>
    <property type="match status" value="1"/>
</dbReference>
<dbReference type="InterPro" id="IPR013785">
    <property type="entry name" value="Aldolase_TIM"/>
</dbReference>
<dbReference type="InterPro" id="IPR006638">
    <property type="entry name" value="Elp3/MiaA/NifB-like_rSAM"/>
</dbReference>
<dbReference type="InterPro" id="IPR031691">
    <property type="entry name" value="LIAS_N"/>
</dbReference>
<dbReference type="InterPro" id="IPR003698">
    <property type="entry name" value="Lipoyl_synth"/>
</dbReference>
<dbReference type="InterPro" id="IPR007197">
    <property type="entry name" value="rSAM"/>
</dbReference>
<dbReference type="NCBIfam" id="TIGR00510">
    <property type="entry name" value="lipA"/>
    <property type="match status" value="1"/>
</dbReference>
<dbReference type="NCBIfam" id="NF004019">
    <property type="entry name" value="PRK05481.1"/>
    <property type="match status" value="1"/>
</dbReference>
<dbReference type="NCBIfam" id="NF009544">
    <property type="entry name" value="PRK12928.1"/>
    <property type="match status" value="1"/>
</dbReference>
<dbReference type="PANTHER" id="PTHR10949">
    <property type="entry name" value="LIPOYL SYNTHASE"/>
    <property type="match status" value="1"/>
</dbReference>
<dbReference type="PANTHER" id="PTHR10949:SF0">
    <property type="entry name" value="LIPOYL SYNTHASE, MITOCHONDRIAL"/>
    <property type="match status" value="1"/>
</dbReference>
<dbReference type="Pfam" id="PF16881">
    <property type="entry name" value="LIAS_N"/>
    <property type="match status" value="1"/>
</dbReference>
<dbReference type="Pfam" id="PF04055">
    <property type="entry name" value="Radical_SAM"/>
    <property type="match status" value="1"/>
</dbReference>
<dbReference type="PIRSF" id="PIRSF005963">
    <property type="entry name" value="Lipoyl_synth"/>
    <property type="match status" value="1"/>
</dbReference>
<dbReference type="SFLD" id="SFLDF00271">
    <property type="entry name" value="lipoyl_synthase"/>
    <property type="match status" value="1"/>
</dbReference>
<dbReference type="SFLD" id="SFLDS00029">
    <property type="entry name" value="Radical_SAM"/>
    <property type="match status" value="1"/>
</dbReference>
<dbReference type="SMART" id="SM00729">
    <property type="entry name" value="Elp3"/>
    <property type="match status" value="1"/>
</dbReference>
<dbReference type="SUPFAM" id="SSF102114">
    <property type="entry name" value="Radical SAM enzymes"/>
    <property type="match status" value="1"/>
</dbReference>
<dbReference type="PROSITE" id="PS51918">
    <property type="entry name" value="RADICAL_SAM"/>
    <property type="match status" value="1"/>
</dbReference>
<organism>
    <name type="scientific">Pectobacterium atrosepticum (strain SCRI 1043 / ATCC BAA-672)</name>
    <name type="common">Erwinia carotovora subsp. atroseptica</name>
    <dbReference type="NCBI Taxonomy" id="218491"/>
    <lineage>
        <taxon>Bacteria</taxon>
        <taxon>Pseudomonadati</taxon>
        <taxon>Pseudomonadota</taxon>
        <taxon>Gammaproteobacteria</taxon>
        <taxon>Enterobacterales</taxon>
        <taxon>Pectobacteriaceae</taxon>
        <taxon>Pectobacterium</taxon>
    </lineage>
</organism>
<evidence type="ECO:0000255" key="1">
    <source>
        <dbReference type="HAMAP-Rule" id="MF_00206"/>
    </source>
</evidence>
<evidence type="ECO:0000255" key="2">
    <source>
        <dbReference type="PROSITE-ProRule" id="PRU01266"/>
    </source>
</evidence>
<accession>Q6D7M8</accession>
<sequence>MSKPIQIERGVKYRDADKMALIPVRTVVTERQELLRKPEWMKIKLPADSSRIQGIKAAMRKNGLHSVCEEASCPNLAECFNHGTATFMILGAICTRRCPFCDVAHGRPLTPDANEPEKLAQTIHDMGLRYVVITSVDRDDLRDGGAQHFADCISAIRRKNPHIRIETLVPDFRGRMDRALEILTATPPDVFNHNLENVPRVYRQVRPGANYEWSLKLLENFKNAHPDITTKSGLMVGLGETNAEIVEVMRDLRRHGVTMLTLGQYLQPSRHHLPVQRYVSPDEFDEMKAEAMAMGFTHAACGPFVRSSYHADLQAKGIEVK</sequence>
<feature type="chain" id="PRO_1000012221" description="Lipoyl synthase">
    <location>
        <begin position="1"/>
        <end position="321"/>
    </location>
</feature>
<feature type="domain" description="Radical SAM core" evidence="2">
    <location>
        <begin position="80"/>
        <end position="297"/>
    </location>
</feature>
<feature type="binding site" evidence="1">
    <location>
        <position position="68"/>
    </location>
    <ligand>
        <name>[4Fe-4S] cluster</name>
        <dbReference type="ChEBI" id="CHEBI:49883"/>
        <label>1</label>
    </ligand>
</feature>
<feature type="binding site" evidence="1">
    <location>
        <position position="73"/>
    </location>
    <ligand>
        <name>[4Fe-4S] cluster</name>
        <dbReference type="ChEBI" id="CHEBI:49883"/>
        <label>1</label>
    </ligand>
</feature>
<feature type="binding site" evidence="1">
    <location>
        <position position="79"/>
    </location>
    <ligand>
        <name>[4Fe-4S] cluster</name>
        <dbReference type="ChEBI" id="CHEBI:49883"/>
        <label>1</label>
    </ligand>
</feature>
<feature type="binding site" evidence="1">
    <location>
        <position position="94"/>
    </location>
    <ligand>
        <name>[4Fe-4S] cluster</name>
        <dbReference type="ChEBI" id="CHEBI:49883"/>
        <label>2</label>
        <note>4Fe-4S-S-AdoMet</note>
    </ligand>
</feature>
<feature type="binding site" evidence="1">
    <location>
        <position position="98"/>
    </location>
    <ligand>
        <name>[4Fe-4S] cluster</name>
        <dbReference type="ChEBI" id="CHEBI:49883"/>
        <label>2</label>
        <note>4Fe-4S-S-AdoMet</note>
    </ligand>
</feature>
<feature type="binding site" evidence="1">
    <location>
        <position position="101"/>
    </location>
    <ligand>
        <name>[4Fe-4S] cluster</name>
        <dbReference type="ChEBI" id="CHEBI:49883"/>
        <label>2</label>
        <note>4Fe-4S-S-AdoMet</note>
    </ligand>
</feature>
<feature type="binding site" evidence="1">
    <location>
        <position position="308"/>
    </location>
    <ligand>
        <name>[4Fe-4S] cluster</name>
        <dbReference type="ChEBI" id="CHEBI:49883"/>
        <label>1</label>
    </ligand>
</feature>
<proteinExistence type="inferred from homology"/>
<comment type="function">
    <text evidence="1">Catalyzes the radical-mediated insertion of two sulfur atoms into the C-6 and C-8 positions of the octanoyl moiety bound to the lipoyl domains of lipoate-dependent enzymes, thereby converting the octanoylated domains into lipoylated derivatives.</text>
</comment>
<comment type="catalytic activity">
    <reaction evidence="1">
        <text>[[Fe-S] cluster scaffold protein carrying a second [4Fe-4S](2+) cluster] + N(6)-octanoyl-L-lysyl-[protein] + 2 oxidized [2Fe-2S]-[ferredoxin] + 2 S-adenosyl-L-methionine + 4 H(+) = [[Fe-S] cluster scaffold protein] + N(6)-[(R)-dihydrolipoyl]-L-lysyl-[protein] + 4 Fe(3+) + 2 hydrogen sulfide + 2 5'-deoxyadenosine + 2 L-methionine + 2 reduced [2Fe-2S]-[ferredoxin]</text>
        <dbReference type="Rhea" id="RHEA:16585"/>
        <dbReference type="Rhea" id="RHEA-COMP:9928"/>
        <dbReference type="Rhea" id="RHEA-COMP:10000"/>
        <dbReference type="Rhea" id="RHEA-COMP:10001"/>
        <dbReference type="Rhea" id="RHEA-COMP:10475"/>
        <dbReference type="Rhea" id="RHEA-COMP:14568"/>
        <dbReference type="Rhea" id="RHEA-COMP:14569"/>
        <dbReference type="ChEBI" id="CHEBI:15378"/>
        <dbReference type="ChEBI" id="CHEBI:17319"/>
        <dbReference type="ChEBI" id="CHEBI:29034"/>
        <dbReference type="ChEBI" id="CHEBI:29919"/>
        <dbReference type="ChEBI" id="CHEBI:33722"/>
        <dbReference type="ChEBI" id="CHEBI:33737"/>
        <dbReference type="ChEBI" id="CHEBI:33738"/>
        <dbReference type="ChEBI" id="CHEBI:57844"/>
        <dbReference type="ChEBI" id="CHEBI:59789"/>
        <dbReference type="ChEBI" id="CHEBI:78809"/>
        <dbReference type="ChEBI" id="CHEBI:83100"/>
        <dbReference type="EC" id="2.8.1.8"/>
    </reaction>
</comment>
<comment type="cofactor">
    <cofactor evidence="1">
        <name>[4Fe-4S] cluster</name>
        <dbReference type="ChEBI" id="CHEBI:49883"/>
    </cofactor>
    <text evidence="1">Binds 2 [4Fe-4S] clusters per subunit. One cluster is coordinated with 3 cysteines and an exchangeable S-adenosyl-L-methionine.</text>
</comment>
<comment type="pathway">
    <text evidence="1">Protein modification; protein lipoylation via endogenous pathway; protein N(6)-(lipoyl)lysine from octanoyl-[acyl-carrier-protein]: step 2/2.</text>
</comment>
<comment type="subcellular location">
    <subcellularLocation>
        <location evidence="1">Cytoplasm</location>
    </subcellularLocation>
</comment>
<comment type="similarity">
    <text evidence="1">Belongs to the radical SAM superfamily. Lipoyl synthase family.</text>
</comment>
<gene>
    <name evidence="1" type="primary">lipA</name>
    <name type="ordered locus">ECA1297</name>
</gene>
<name>LIPA_PECAS</name>
<reference key="1">
    <citation type="journal article" date="2004" name="Proc. Natl. Acad. Sci. U.S.A.">
        <title>Genome sequence of the enterobacterial phytopathogen Erwinia carotovora subsp. atroseptica and characterization of virulence factors.</title>
        <authorList>
            <person name="Bell K.S."/>
            <person name="Sebaihia M."/>
            <person name="Pritchard L."/>
            <person name="Holden M.T.G."/>
            <person name="Hyman L.J."/>
            <person name="Holeva M.C."/>
            <person name="Thomson N.R."/>
            <person name="Bentley S.D."/>
            <person name="Churcher L.J.C."/>
            <person name="Mungall K."/>
            <person name="Atkin R."/>
            <person name="Bason N."/>
            <person name="Brooks K."/>
            <person name="Chillingworth T."/>
            <person name="Clark K."/>
            <person name="Doggett J."/>
            <person name="Fraser A."/>
            <person name="Hance Z."/>
            <person name="Hauser H."/>
            <person name="Jagels K."/>
            <person name="Moule S."/>
            <person name="Norbertczak H."/>
            <person name="Ormond D."/>
            <person name="Price C."/>
            <person name="Quail M.A."/>
            <person name="Sanders M."/>
            <person name="Walker D."/>
            <person name="Whitehead S."/>
            <person name="Salmond G.P.C."/>
            <person name="Birch P.R.J."/>
            <person name="Parkhill J."/>
            <person name="Toth I.K."/>
        </authorList>
    </citation>
    <scope>NUCLEOTIDE SEQUENCE [LARGE SCALE GENOMIC DNA]</scope>
    <source>
        <strain>SCRI 1043 / ATCC BAA-672</strain>
    </source>
</reference>
<protein>
    <recommendedName>
        <fullName evidence="1">Lipoyl synthase</fullName>
        <ecNumber evidence="1">2.8.1.8</ecNumber>
    </recommendedName>
    <alternativeName>
        <fullName evidence="1">Lip-syn</fullName>
        <shortName evidence="1">LS</shortName>
    </alternativeName>
    <alternativeName>
        <fullName evidence="1">Lipoate synthase</fullName>
    </alternativeName>
    <alternativeName>
        <fullName evidence="1">Lipoic acid synthase</fullName>
    </alternativeName>
    <alternativeName>
        <fullName evidence="1">Sulfur insertion protein LipA</fullName>
    </alternativeName>
</protein>